<sequence length="555" mass="64802">MEFTEQLFMITGCPERHNDKPIGRGFNIISMKSFKKGKGFILFEAKHIPKNYYGYYLRPVILPTNNREFAFQKSPWGYYTNMVSLDEIYELANPQTFYMLEKYGLDLGEMSAESRALNYSKYYADDYTNSFAHKYFLSRKNMYEDGHCQDIDCEPNQSEDTDCESNRSENSEDIGYVIDFNNIYKLKNVTHTPYLGMNLPDRLFIITVYRGVFGTKLISQGLNCFSKQEFNRQKGFIVLNAKNIIKDCYGYFIHSVILPTSHPEFILEDRHTYYYTNMVIIDKTYELSDPETFRILGKYGLDLTVYSAEQRAKNYETSRPMNVLKSTSNHHMPSCDFSHVDSTYNRTSTTSVWTTKNIPLTIDTKVNNIHQFIQKDEFKSAQKLLEDDIVFKKVVDTAIKSNNQKTIKYLIDQQQFDINEAIKLALEENKLDIFNMLRLFNFDKVRCLATASILGYLEIVDKMMENDFEKINGDLVNIVLRNAAEGGKIDIVWYISEKFIEFVTKIDIEVAETIVKQRIQHICTFSDDNDIDISVEQDMLELFENMKMIVVNSKF</sequence>
<feature type="chain" id="PRO_0000249868" description="Putative ankyrin repeat protein L283">
    <location>
        <begin position="1"/>
        <end position="555"/>
    </location>
</feature>
<feature type="repeat" description="ANK 1">
    <location>
        <begin position="364"/>
        <end position="389"/>
    </location>
</feature>
<feature type="repeat" description="ANK 2">
    <location>
        <begin position="390"/>
        <end position="420"/>
    </location>
</feature>
<feature type="repeat" description="ANK 3">
    <location>
        <begin position="422"/>
        <end position="447"/>
    </location>
</feature>
<feature type="repeat" description="ANK 4">
    <location>
        <begin position="455"/>
        <end position="488"/>
    </location>
</feature>
<organism>
    <name type="scientific">Acanthamoeba polyphaga mimivirus</name>
    <name type="common">APMV</name>
    <dbReference type="NCBI Taxonomy" id="212035"/>
    <lineage>
        <taxon>Viruses</taxon>
        <taxon>Varidnaviria</taxon>
        <taxon>Bamfordvirae</taxon>
        <taxon>Nucleocytoviricota</taxon>
        <taxon>Megaviricetes</taxon>
        <taxon>Imitervirales</taxon>
        <taxon>Mimiviridae</taxon>
        <taxon>Megamimivirinae</taxon>
        <taxon>Mimivirus</taxon>
        <taxon>Mimivirus bradfordmassiliense</taxon>
    </lineage>
</organism>
<keyword id="KW-0040">ANK repeat</keyword>
<keyword id="KW-1185">Reference proteome</keyword>
<keyword id="KW-0677">Repeat</keyword>
<dbReference type="EMBL" id="AY653733">
    <property type="protein sequence ID" value="AAV50555.1"/>
    <property type="molecule type" value="Genomic_DNA"/>
</dbReference>
<dbReference type="SMR" id="Q5UPW4"/>
<dbReference type="KEGG" id="vg:9924898"/>
<dbReference type="OrthoDB" id="35842at10239"/>
<dbReference type="Proteomes" id="UP000001134">
    <property type="component" value="Genome"/>
</dbReference>
<dbReference type="InterPro" id="IPR036770">
    <property type="entry name" value="Ankyrin_rpt-contain_sf"/>
</dbReference>
<dbReference type="SUPFAM" id="SSF48403">
    <property type="entry name" value="Ankyrin repeat"/>
    <property type="match status" value="1"/>
</dbReference>
<accession>Q5UPW4</accession>
<gene>
    <name type="ordered locus">MIMI_L283</name>
</gene>
<reference key="1">
    <citation type="journal article" date="2004" name="Science">
        <title>The 1.2-megabase genome sequence of Mimivirus.</title>
        <authorList>
            <person name="Raoult D."/>
            <person name="Audic S."/>
            <person name="Robert C."/>
            <person name="Abergel C."/>
            <person name="Renesto P."/>
            <person name="Ogata H."/>
            <person name="La Scola B."/>
            <person name="Susan M."/>
            <person name="Claverie J.-M."/>
        </authorList>
    </citation>
    <scope>NUCLEOTIDE SEQUENCE [LARGE SCALE GENOMIC DNA]</scope>
    <source>
        <strain>Rowbotham-Bradford</strain>
    </source>
</reference>
<name>YL283_MIMIV</name>
<organismHost>
    <name type="scientific">Acanthamoeba polyphaga</name>
    <name type="common">Amoeba</name>
    <dbReference type="NCBI Taxonomy" id="5757"/>
</organismHost>
<protein>
    <recommendedName>
        <fullName>Putative ankyrin repeat protein L283</fullName>
    </recommendedName>
</protein>
<proteinExistence type="predicted"/>